<reference key="1">
    <citation type="journal article" date="1983" name="J. Biol. Chem.">
        <title>Primary structures of both subunits of Escherichia coli glycyl-tRNA synthetase.</title>
        <authorList>
            <person name="Webster T.A."/>
            <person name="Gibson B.W."/>
            <person name="Keng T."/>
            <person name="Biemann K."/>
            <person name="Schimmel P."/>
        </authorList>
    </citation>
    <scope>NUCLEOTIDE SEQUENCE [GENOMIC DNA]</scope>
</reference>
<reference key="2">
    <citation type="journal article" date="1994" name="Nucleic Acids Res.">
        <title>Analysis of the Escherichia coli genome. V. DNA sequence of the region from 76.0 to 81.5 minutes.</title>
        <authorList>
            <person name="Sofia H.J."/>
            <person name="Burland V."/>
            <person name="Daniels D.L."/>
            <person name="Plunkett G. III"/>
            <person name="Blattner F.R."/>
        </authorList>
    </citation>
    <scope>NUCLEOTIDE SEQUENCE [LARGE SCALE GENOMIC DNA]</scope>
    <source>
        <strain>K12 / MG1655 / ATCC 47076</strain>
    </source>
</reference>
<reference key="3">
    <citation type="journal article" date="1997" name="Science">
        <title>The complete genome sequence of Escherichia coli K-12.</title>
        <authorList>
            <person name="Blattner F.R."/>
            <person name="Plunkett G. III"/>
            <person name="Bloch C.A."/>
            <person name="Perna N.T."/>
            <person name="Burland V."/>
            <person name="Riley M."/>
            <person name="Collado-Vides J."/>
            <person name="Glasner J.D."/>
            <person name="Rode C.K."/>
            <person name="Mayhew G.F."/>
            <person name="Gregor J."/>
            <person name="Davis N.W."/>
            <person name="Kirkpatrick H.A."/>
            <person name="Goeden M.A."/>
            <person name="Rose D.J."/>
            <person name="Mau B."/>
            <person name="Shao Y."/>
        </authorList>
    </citation>
    <scope>NUCLEOTIDE SEQUENCE [LARGE SCALE GENOMIC DNA]</scope>
    <source>
        <strain>K12 / MG1655 / ATCC 47076</strain>
    </source>
</reference>
<reference key="4">
    <citation type="journal article" date="2006" name="Mol. Syst. Biol.">
        <title>Highly accurate genome sequences of Escherichia coli K-12 strains MG1655 and W3110.</title>
        <authorList>
            <person name="Hayashi K."/>
            <person name="Morooka N."/>
            <person name="Yamamoto Y."/>
            <person name="Fujita K."/>
            <person name="Isono K."/>
            <person name="Choi S."/>
            <person name="Ohtsubo E."/>
            <person name="Baba T."/>
            <person name="Wanner B.L."/>
            <person name="Mori H."/>
            <person name="Horiuchi T."/>
        </authorList>
    </citation>
    <scope>NUCLEOTIDE SEQUENCE [LARGE SCALE GENOMIC DNA]</scope>
    <source>
        <strain>K12 / W3110 / ATCC 27325 / DSM 5911</strain>
    </source>
</reference>
<reference key="5">
    <citation type="journal article" date="1982" name="J. Biol. Chem.">
        <title>Gene for Escherichia coli glycyl-tRNA synthetase has tandem subunit coding regions in the same reading frame.</title>
        <authorList>
            <person name="Keng T."/>
            <person name="Webster T.A."/>
            <person name="Sauer R.T."/>
            <person name="Schimmel P."/>
        </authorList>
    </citation>
    <scope>NUCLEOTIDE SEQUENCE [GENOMIC DNA] OF 268-303</scope>
</reference>
<keyword id="KW-0002">3D-structure</keyword>
<keyword id="KW-0030">Aminoacyl-tRNA synthetase</keyword>
<keyword id="KW-0067">ATP-binding</keyword>
<keyword id="KW-0963">Cytoplasm</keyword>
<keyword id="KW-0436">Ligase</keyword>
<keyword id="KW-0547">Nucleotide-binding</keyword>
<keyword id="KW-0648">Protein biosynthesis</keyword>
<keyword id="KW-1185">Reference proteome</keyword>
<sequence>MQKFDTRTFQGLILTLQDYWARQGCTIVQPLDMEVGAGTSHPMTCLRELGPEPMAAAYVQPSRRPTDGRYGENPNRLQHYYQFQVVIKPSPDNIQELYLGSLKELGMDPTIHDIRFVEDNWENPTLGAWGLGWEVWLNGMEVTQFTYFQQVGGLECKPVTGEITYGLERLAMYIQGVDSVYDLVWSDGPLGKTTYGDVFHQNEVEQSTYNFEYADVDFLFTCFEQYEKEAQQLLALENPLPLPAYERILKAAHSFNLLDARKAISVTERQRYILRIRTLTKAVAEAYYASREALGFPMCNKDK</sequence>
<proteinExistence type="evidence at protein level"/>
<comment type="catalytic activity">
    <reaction>
        <text>tRNA(Gly) + glycine + ATP = glycyl-tRNA(Gly) + AMP + diphosphate</text>
        <dbReference type="Rhea" id="RHEA:16013"/>
        <dbReference type="Rhea" id="RHEA-COMP:9664"/>
        <dbReference type="Rhea" id="RHEA-COMP:9683"/>
        <dbReference type="ChEBI" id="CHEBI:30616"/>
        <dbReference type="ChEBI" id="CHEBI:33019"/>
        <dbReference type="ChEBI" id="CHEBI:57305"/>
        <dbReference type="ChEBI" id="CHEBI:78442"/>
        <dbReference type="ChEBI" id="CHEBI:78522"/>
        <dbReference type="ChEBI" id="CHEBI:456215"/>
        <dbReference type="EC" id="6.1.1.14"/>
    </reaction>
</comment>
<comment type="subunit">
    <text>Tetramer of two alpha and two beta subunits.</text>
</comment>
<comment type="interaction">
    <interactant intactId="EBI-551191">
        <id>P00960</id>
    </interactant>
    <interactant intactId="EBI-551400">
        <id>P00961</id>
        <label>glyS</label>
    </interactant>
    <organismsDiffer>false</organismsDiffer>
    <experiments>3</experiments>
</comment>
<comment type="subcellular location">
    <subcellularLocation>
        <location>Cytoplasm</location>
    </subcellularLocation>
</comment>
<comment type="similarity">
    <text evidence="1">Belongs to the class-II aminoacyl-tRNA synthetase family.</text>
</comment>
<accession>P00960</accession>
<accession>Q2M7M2</accession>
<organism>
    <name type="scientific">Escherichia coli (strain K12)</name>
    <dbReference type="NCBI Taxonomy" id="83333"/>
    <lineage>
        <taxon>Bacteria</taxon>
        <taxon>Pseudomonadati</taxon>
        <taxon>Pseudomonadota</taxon>
        <taxon>Gammaproteobacteria</taxon>
        <taxon>Enterobacterales</taxon>
        <taxon>Enterobacteriaceae</taxon>
        <taxon>Escherichia</taxon>
    </lineage>
</organism>
<evidence type="ECO:0000305" key="1"/>
<evidence type="ECO:0007829" key="2">
    <source>
        <dbReference type="PDB" id="7EIV"/>
    </source>
</evidence>
<evidence type="ECO:0007829" key="3">
    <source>
        <dbReference type="PDB" id="7QCF"/>
    </source>
</evidence>
<evidence type="ECO:0007829" key="4">
    <source>
        <dbReference type="PDB" id="7YSE"/>
    </source>
</evidence>
<feature type="chain" id="PRO_0000072836" description="Glycine--tRNA ligase alpha subunit">
    <location>
        <begin position="1"/>
        <end position="303"/>
    </location>
</feature>
<feature type="sequence conflict" description="In Ref. 1; AAA23914." evidence="1" ref="1">
    <original>E</original>
    <variation>A</variation>
    <location>
        <position position="48"/>
    </location>
</feature>
<feature type="sequence conflict" description="In Ref. 1; AAA23914." evidence="1" ref="1">
    <original>P</original>
    <variation>A</variation>
    <location>
        <position position="65"/>
    </location>
</feature>
<feature type="helix" evidence="2">
    <location>
        <begin position="9"/>
        <end position="21"/>
    </location>
</feature>
<feature type="turn" evidence="2">
    <location>
        <begin position="22"/>
        <end position="24"/>
    </location>
</feature>
<feature type="strand" evidence="4">
    <location>
        <begin position="35"/>
        <end position="37"/>
    </location>
</feature>
<feature type="helix" evidence="2">
    <location>
        <begin position="38"/>
        <end position="40"/>
    </location>
</feature>
<feature type="helix" evidence="2">
    <location>
        <begin position="42"/>
        <end position="45"/>
    </location>
</feature>
<feature type="turn" evidence="2">
    <location>
        <begin position="46"/>
        <end position="48"/>
    </location>
</feature>
<feature type="strand" evidence="2">
    <location>
        <begin position="49"/>
        <end position="51"/>
    </location>
</feature>
<feature type="strand" evidence="2">
    <location>
        <begin position="54"/>
        <end position="63"/>
    </location>
</feature>
<feature type="helix" evidence="2">
    <location>
        <begin position="65"/>
        <end position="67"/>
    </location>
</feature>
<feature type="strand" evidence="2">
    <location>
        <begin position="73"/>
        <end position="75"/>
    </location>
</feature>
<feature type="strand" evidence="2">
    <location>
        <begin position="78"/>
        <end position="89"/>
    </location>
</feature>
<feature type="helix" evidence="2">
    <location>
        <begin position="94"/>
        <end position="104"/>
    </location>
</feature>
<feature type="turn" evidence="2">
    <location>
        <begin position="109"/>
        <end position="111"/>
    </location>
</feature>
<feature type="strand" evidence="2">
    <location>
        <begin position="114"/>
        <end position="118"/>
    </location>
</feature>
<feature type="strand" evidence="3">
    <location>
        <begin position="121"/>
        <end position="123"/>
    </location>
</feature>
<feature type="helix" evidence="2">
    <location>
        <begin position="124"/>
        <end position="126"/>
    </location>
</feature>
<feature type="strand" evidence="2">
    <location>
        <begin position="128"/>
        <end position="137"/>
    </location>
</feature>
<feature type="strand" evidence="2">
    <location>
        <begin position="140"/>
        <end position="151"/>
    </location>
</feature>
<feature type="strand" evidence="2">
    <location>
        <begin position="154"/>
        <end position="166"/>
    </location>
</feature>
<feature type="helix" evidence="2">
    <location>
        <begin position="167"/>
        <end position="175"/>
    </location>
</feature>
<feature type="helix" evidence="2">
    <location>
        <begin position="180"/>
        <end position="182"/>
    </location>
</feature>
<feature type="strand" evidence="2">
    <location>
        <begin position="184"/>
        <end position="188"/>
    </location>
</feature>
<feature type="strand" evidence="2">
    <location>
        <begin position="191"/>
        <end position="194"/>
    </location>
</feature>
<feature type="helix" evidence="2">
    <location>
        <begin position="195"/>
        <end position="212"/>
    </location>
</feature>
<feature type="helix" evidence="2">
    <location>
        <begin position="216"/>
        <end position="234"/>
    </location>
</feature>
<feature type="strand" evidence="2">
    <location>
        <begin position="235"/>
        <end position="238"/>
    </location>
</feature>
<feature type="helix" evidence="2">
    <location>
        <begin position="241"/>
        <end position="260"/>
    </location>
</feature>
<feature type="helix" evidence="2">
    <location>
        <begin position="266"/>
        <end position="293"/>
    </location>
</feature>
<feature type="helix" evidence="2">
    <location>
        <begin position="297"/>
        <end position="299"/>
    </location>
</feature>
<dbReference type="EC" id="6.1.1.14"/>
<dbReference type="EMBL" id="J01622">
    <property type="protein sequence ID" value="AAA23914.1"/>
    <property type="molecule type" value="Genomic_DNA"/>
</dbReference>
<dbReference type="EMBL" id="U00039">
    <property type="protein sequence ID" value="AAB18537.1"/>
    <property type="molecule type" value="Genomic_DNA"/>
</dbReference>
<dbReference type="EMBL" id="U00096">
    <property type="protein sequence ID" value="AAC76584.1"/>
    <property type="molecule type" value="Genomic_DNA"/>
</dbReference>
<dbReference type="EMBL" id="AP009048">
    <property type="protein sequence ID" value="BAE77734.1"/>
    <property type="molecule type" value="Genomic_DNA"/>
</dbReference>
<dbReference type="EMBL" id="J01623">
    <property type="protein sequence ID" value="AAA23916.1"/>
    <property type="molecule type" value="Genomic_DNA"/>
</dbReference>
<dbReference type="PIR" id="B65155">
    <property type="entry name" value="SYECGA"/>
</dbReference>
<dbReference type="RefSeq" id="NP_418017.1">
    <property type="nucleotide sequence ID" value="NC_000913.3"/>
</dbReference>
<dbReference type="RefSeq" id="WP_001168560.1">
    <property type="nucleotide sequence ID" value="NZ_CP064677.1"/>
</dbReference>
<dbReference type="PDB" id="7EIV">
    <property type="method" value="X-ray"/>
    <property type="resolution" value="2.68 A"/>
    <property type="chains" value="A/B=1-303"/>
</dbReference>
<dbReference type="PDB" id="7QCF">
    <property type="method" value="X-ray"/>
    <property type="resolution" value="3.00 A"/>
    <property type="chains" value="A/B/C/D=2-303"/>
</dbReference>
<dbReference type="PDB" id="7YSE">
    <property type="method" value="X-ray"/>
    <property type="resolution" value="2.91 A"/>
    <property type="chains" value="A/B=1-303"/>
</dbReference>
<dbReference type="PDBsum" id="7EIV"/>
<dbReference type="PDBsum" id="7QCF"/>
<dbReference type="PDBsum" id="7YSE"/>
<dbReference type="SMR" id="P00960"/>
<dbReference type="BioGRID" id="4259717">
    <property type="interactions" value="52"/>
</dbReference>
<dbReference type="BioGRID" id="852387">
    <property type="interactions" value="7"/>
</dbReference>
<dbReference type="ComplexPortal" id="CPX-5201">
    <property type="entry name" value="Glycyl-tRNA synthetase complex"/>
</dbReference>
<dbReference type="DIP" id="DIP-9816N"/>
<dbReference type="FunCoup" id="P00960">
    <property type="interactions" value="520"/>
</dbReference>
<dbReference type="IntAct" id="P00960">
    <property type="interactions" value="33"/>
</dbReference>
<dbReference type="STRING" id="511145.b3560"/>
<dbReference type="jPOST" id="P00960"/>
<dbReference type="PaxDb" id="511145-b3560"/>
<dbReference type="EnsemblBacteria" id="AAC76584">
    <property type="protein sequence ID" value="AAC76584"/>
    <property type="gene ID" value="b3560"/>
</dbReference>
<dbReference type="GeneID" id="948079"/>
<dbReference type="KEGG" id="ecj:JW3531"/>
<dbReference type="KEGG" id="eco:b3560"/>
<dbReference type="PATRIC" id="fig|511145.12.peg.3674"/>
<dbReference type="EchoBASE" id="EB0404"/>
<dbReference type="eggNOG" id="COG0752">
    <property type="taxonomic scope" value="Bacteria"/>
</dbReference>
<dbReference type="HOGENOM" id="CLU_057066_1_0_6"/>
<dbReference type="InParanoid" id="P00960"/>
<dbReference type="PhylomeDB" id="P00960"/>
<dbReference type="BioCyc" id="EcoCyc:GLYQ-MONOMER"/>
<dbReference type="BioCyc" id="MetaCyc:GLYQ-MONOMER"/>
<dbReference type="PRO" id="PR:P00960"/>
<dbReference type="Proteomes" id="UP000000625">
    <property type="component" value="Chromosome"/>
</dbReference>
<dbReference type="GO" id="GO:0005829">
    <property type="term" value="C:cytosol"/>
    <property type="evidence" value="ECO:0000314"/>
    <property type="project" value="EcoCyc"/>
</dbReference>
<dbReference type="GO" id="GO:0009345">
    <property type="term" value="C:glycine-tRNA ligase complex"/>
    <property type="evidence" value="ECO:0000314"/>
    <property type="project" value="EcoCyc"/>
</dbReference>
<dbReference type="GO" id="GO:0005524">
    <property type="term" value="F:ATP binding"/>
    <property type="evidence" value="ECO:0007669"/>
    <property type="project" value="UniProtKB-UniRule"/>
</dbReference>
<dbReference type="GO" id="GO:0004820">
    <property type="term" value="F:glycine-tRNA ligase activity"/>
    <property type="evidence" value="ECO:0007669"/>
    <property type="project" value="UniProtKB-UniRule"/>
</dbReference>
<dbReference type="GO" id="GO:0006426">
    <property type="term" value="P:glycyl-tRNA aminoacylation"/>
    <property type="evidence" value="ECO:0000314"/>
    <property type="project" value="ComplexPortal"/>
</dbReference>
<dbReference type="CDD" id="cd00733">
    <property type="entry name" value="GlyRS_alpha_core"/>
    <property type="match status" value="1"/>
</dbReference>
<dbReference type="FunFam" id="1.20.58.180:FF:000001">
    <property type="entry name" value="Glycine--tRNA ligase alpha subunit"/>
    <property type="match status" value="1"/>
</dbReference>
<dbReference type="FunFam" id="3.30.930.10:FF:000006">
    <property type="entry name" value="Glycine--tRNA ligase alpha subunit"/>
    <property type="match status" value="1"/>
</dbReference>
<dbReference type="Gene3D" id="3.30.930.10">
    <property type="entry name" value="Bira Bifunctional Protein, Domain 2"/>
    <property type="match status" value="1"/>
</dbReference>
<dbReference type="Gene3D" id="1.20.58.180">
    <property type="entry name" value="Class II aaRS and biotin synthetases, domain 2"/>
    <property type="match status" value="1"/>
</dbReference>
<dbReference type="HAMAP" id="MF_00254">
    <property type="entry name" value="Gly_tRNA_synth_alpha"/>
    <property type="match status" value="1"/>
</dbReference>
<dbReference type="InterPro" id="IPR045864">
    <property type="entry name" value="aa-tRNA-synth_II/BPL/LPL"/>
</dbReference>
<dbReference type="InterPro" id="IPR006194">
    <property type="entry name" value="Gly-tRNA-synth_heterodimer"/>
</dbReference>
<dbReference type="InterPro" id="IPR002310">
    <property type="entry name" value="Gly-tRNA_ligase_asu"/>
</dbReference>
<dbReference type="NCBIfam" id="TIGR00388">
    <property type="entry name" value="glyQ"/>
    <property type="match status" value="1"/>
</dbReference>
<dbReference type="NCBIfam" id="NF006827">
    <property type="entry name" value="PRK09348.1"/>
    <property type="match status" value="1"/>
</dbReference>
<dbReference type="PANTHER" id="PTHR30075:SF2">
    <property type="entry name" value="GLYCINE--TRNA LIGASE, CHLOROPLASTIC_MITOCHONDRIAL 2"/>
    <property type="match status" value="1"/>
</dbReference>
<dbReference type="PANTHER" id="PTHR30075">
    <property type="entry name" value="GLYCYL-TRNA SYNTHETASE"/>
    <property type="match status" value="1"/>
</dbReference>
<dbReference type="Pfam" id="PF02091">
    <property type="entry name" value="tRNA-synt_2e"/>
    <property type="match status" value="1"/>
</dbReference>
<dbReference type="PRINTS" id="PR01044">
    <property type="entry name" value="TRNASYNTHGA"/>
</dbReference>
<dbReference type="SUPFAM" id="SSF55681">
    <property type="entry name" value="Class II aaRS and biotin synthetases"/>
    <property type="match status" value="1"/>
</dbReference>
<dbReference type="PROSITE" id="PS50861">
    <property type="entry name" value="AA_TRNA_LIGASE_II_GLYAB"/>
    <property type="match status" value="1"/>
</dbReference>
<name>SYGA_ECOLI</name>
<protein>
    <recommendedName>
        <fullName>Glycine--tRNA ligase alpha subunit</fullName>
        <ecNumber>6.1.1.14</ecNumber>
    </recommendedName>
    <alternativeName>
        <fullName>Glycyl-tRNA synthetase alpha subunit</fullName>
        <shortName>GlyRS</shortName>
    </alternativeName>
</protein>
<gene>
    <name type="primary">glyQ</name>
    <name type="synonym">glyS(A)</name>
    <name type="ordered locus">b3560</name>
    <name type="ordered locus">JW3531</name>
</gene>